<evidence type="ECO:0000255" key="1">
    <source>
        <dbReference type="HAMAP-Rule" id="MF_01722"/>
    </source>
</evidence>
<comment type="function">
    <text evidence="1">Part of the ABC transporter complex XylFGH involved in xylose import. Responsible for energy coupling to the transport system.</text>
</comment>
<comment type="catalytic activity">
    <reaction evidence="1">
        <text>D-xylose(out) + ATP + H2O = D-xylose(in) + ADP + phosphate + H(+)</text>
        <dbReference type="Rhea" id="RHEA:29899"/>
        <dbReference type="ChEBI" id="CHEBI:15377"/>
        <dbReference type="ChEBI" id="CHEBI:15378"/>
        <dbReference type="ChEBI" id="CHEBI:30616"/>
        <dbReference type="ChEBI" id="CHEBI:43474"/>
        <dbReference type="ChEBI" id="CHEBI:53455"/>
        <dbReference type="ChEBI" id="CHEBI:456216"/>
        <dbReference type="EC" id="7.5.2.10"/>
    </reaction>
</comment>
<comment type="subunit">
    <text evidence="1">The complex is composed of two ATP-binding proteins (XylG), two transmembrane proteins (XylH) and a solute-binding protein (XylF).</text>
</comment>
<comment type="subcellular location">
    <subcellularLocation>
        <location evidence="1">Cell inner membrane</location>
        <topology evidence="1">Peripheral membrane protein</topology>
    </subcellularLocation>
</comment>
<comment type="similarity">
    <text evidence="1">Belongs to the ABC transporter superfamily. Xylose importer (TC 3.A.1.2.4) family.</text>
</comment>
<proteinExistence type="inferred from homology"/>
<reference key="1">
    <citation type="journal article" date="2005" name="Proc. Natl. Acad. Sci. U.S.A.">
        <title>Comparison of the complete genome sequences of Pseudomonas syringae pv. syringae B728a and pv. tomato DC3000.</title>
        <authorList>
            <person name="Feil H."/>
            <person name="Feil W.S."/>
            <person name="Chain P."/>
            <person name="Larimer F."/>
            <person name="Dibartolo G."/>
            <person name="Copeland A."/>
            <person name="Lykidis A."/>
            <person name="Trong S."/>
            <person name="Nolan M."/>
            <person name="Goltsman E."/>
            <person name="Thiel J."/>
            <person name="Malfatti S."/>
            <person name="Loper J.E."/>
            <person name="Lapidus A."/>
            <person name="Detter J.C."/>
            <person name="Land M."/>
            <person name="Richardson P.M."/>
            <person name="Kyrpides N.C."/>
            <person name="Ivanova N."/>
            <person name="Lindow S.E."/>
        </authorList>
    </citation>
    <scope>NUCLEOTIDE SEQUENCE [LARGE SCALE GENOMIC DNA]</scope>
    <source>
        <strain>B728a</strain>
    </source>
</reference>
<protein>
    <recommendedName>
        <fullName evidence="1">Xylose import ATP-binding protein XylG</fullName>
        <ecNumber evidence="1">7.5.2.10</ecNumber>
    </recommendedName>
</protein>
<dbReference type="EC" id="7.5.2.10" evidence="1"/>
<dbReference type="EMBL" id="CP000075">
    <property type="protein sequence ID" value="AAY37919.1"/>
    <property type="molecule type" value="Genomic_DNA"/>
</dbReference>
<dbReference type="RefSeq" id="WP_011268061.1">
    <property type="nucleotide sequence ID" value="NC_007005.1"/>
</dbReference>
<dbReference type="RefSeq" id="YP_235957.1">
    <property type="nucleotide sequence ID" value="NC_007005.1"/>
</dbReference>
<dbReference type="SMR" id="Q4ZSF3"/>
<dbReference type="STRING" id="205918.Psyr_2885"/>
<dbReference type="KEGG" id="psb:Psyr_2885"/>
<dbReference type="PATRIC" id="fig|205918.7.peg.2941"/>
<dbReference type="eggNOG" id="COG1129">
    <property type="taxonomic scope" value="Bacteria"/>
</dbReference>
<dbReference type="HOGENOM" id="CLU_000604_92_3_6"/>
<dbReference type="OrthoDB" id="9776369at2"/>
<dbReference type="Proteomes" id="UP000000426">
    <property type="component" value="Chromosome"/>
</dbReference>
<dbReference type="GO" id="GO:0005886">
    <property type="term" value="C:plasma membrane"/>
    <property type="evidence" value="ECO:0007669"/>
    <property type="project" value="UniProtKB-SubCell"/>
</dbReference>
<dbReference type="GO" id="GO:0015614">
    <property type="term" value="F:ABC-type D-xylose transporter activity"/>
    <property type="evidence" value="ECO:0007669"/>
    <property type="project" value="UniProtKB-EC"/>
</dbReference>
<dbReference type="GO" id="GO:0005524">
    <property type="term" value="F:ATP binding"/>
    <property type="evidence" value="ECO:0007669"/>
    <property type="project" value="UniProtKB-KW"/>
</dbReference>
<dbReference type="GO" id="GO:0016887">
    <property type="term" value="F:ATP hydrolysis activity"/>
    <property type="evidence" value="ECO:0007669"/>
    <property type="project" value="InterPro"/>
</dbReference>
<dbReference type="CDD" id="cd03216">
    <property type="entry name" value="ABC_Carb_Monos_I"/>
    <property type="match status" value="1"/>
</dbReference>
<dbReference type="CDD" id="cd03215">
    <property type="entry name" value="ABC_Carb_Monos_II"/>
    <property type="match status" value="1"/>
</dbReference>
<dbReference type="FunFam" id="3.40.50.300:FF:000127">
    <property type="entry name" value="Ribose import ATP-binding protein RbsA"/>
    <property type="match status" value="1"/>
</dbReference>
<dbReference type="Gene3D" id="3.40.50.300">
    <property type="entry name" value="P-loop containing nucleotide triphosphate hydrolases"/>
    <property type="match status" value="2"/>
</dbReference>
<dbReference type="InterPro" id="IPR003593">
    <property type="entry name" value="AAA+_ATPase"/>
</dbReference>
<dbReference type="InterPro" id="IPR050107">
    <property type="entry name" value="ABC_carbohydrate_import_ATPase"/>
</dbReference>
<dbReference type="InterPro" id="IPR003439">
    <property type="entry name" value="ABC_transporter-like_ATP-bd"/>
</dbReference>
<dbReference type="InterPro" id="IPR017871">
    <property type="entry name" value="ABC_transporter-like_CS"/>
</dbReference>
<dbReference type="InterPro" id="IPR013455">
    <property type="entry name" value="ABC_transptr_XylG"/>
</dbReference>
<dbReference type="InterPro" id="IPR027417">
    <property type="entry name" value="P-loop_NTPase"/>
</dbReference>
<dbReference type="NCBIfam" id="NF010069">
    <property type="entry name" value="PRK13549.1"/>
    <property type="match status" value="1"/>
</dbReference>
<dbReference type="NCBIfam" id="TIGR02633">
    <property type="entry name" value="xylG"/>
    <property type="match status" value="1"/>
</dbReference>
<dbReference type="PANTHER" id="PTHR43790">
    <property type="entry name" value="CARBOHYDRATE TRANSPORT ATP-BINDING PROTEIN MG119-RELATED"/>
    <property type="match status" value="1"/>
</dbReference>
<dbReference type="PANTHER" id="PTHR43790:SF1">
    <property type="entry name" value="XYLOSE IMPORT ATP-BINDING PROTEIN XYLG"/>
    <property type="match status" value="1"/>
</dbReference>
<dbReference type="Pfam" id="PF00005">
    <property type="entry name" value="ABC_tran"/>
    <property type="match status" value="2"/>
</dbReference>
<dbReference type="SMART" id="SM00382">
    <property type="entry name" value="AAA"/>
    <property type="match status" value="2"/>
</dbReference>
<dbReference type="SUPFAM" id="SSF52540">
    <property type="entry name" value="P-loop containing nucleoside triphosphate hydrolases"/>
    <property type="match status" value="2"/>
</dbReference>
<dbReference type="PROSITE" id="PS00211">
    <property type="entry name" value="ABC_TRANSPORTER_1"/>
    <property type="match status" value="1"/>
</dbReference>
<dbReference type="PROSITE" id="PS50893">
    <property type="entry name" value="ABC_TRANSPORTER_2"/>
    <property type="match status" value="2"/>
</dbReference>
<dbReference type="PROSITE" id="PS51280">
    <property type="entry name" value="XYLG"/>
    <property type="match status" value="1"/>
</dbReference>
<gene>
    <name evidence="1" type="primary">xylG</name>
    <name type="ordered locus">Psyr_2885</name>
</gene>
<name>XYLG_PSEU2</name>
<keyword id="KW-0067">ATP-binding</keyword>
<keyword id="KW-0997">Cell inner membrane</keyword>
<keyword id="KW-1003">Cell membrane</keyword>
<keyword id="KW-0472">Membrane</keyword>
<keyword id="KW-0547">Nucleotide-binding</keyword>
<keyword id="KW-0677">Repeat</keyword>
<keyword id="KW-0762">Sugar transport</keyword>
<keyword id="KW-1278">Translocase</keyword>
<keyword id="KW-0813">Transport</keyword>
<organism>
    <name type="scientific">Pseudomonas syringae pv. syringae (strain B728a)</name>
    <dbReference type="NCBI Taxonomy" id="205918"/>
    <lineage>
        <taxon>Bacteria</taxon>
        <taxon>Pseudomonadati</taxon>
        <taxon>Pseudomonadota</taxon>
        <taxon>Gammaproteobacteria</taxon>
        <taxon>Pseudomonadales</taxon>
        <taxon>Pseudomonadaceae</taxon>
        <taxon>Pseudomonas</taxon>
        <taxon>Pseudomonas syringae</taxon>
    </lineage>
</organism>
<accession>Q4ZSF3</accession>
<feature type="chain" id="PRO_0000271511" description="Xylose import ATP-binding protein XylG">
    <location>
        <begin position="1"/>
        <end position="518"/>
    </location>
</feature>
<feature type="domain" description="ABC transporter 1" evidence="1">
    <location>
        <begin position="6"/>
        <end position="245"/>
    </location>
</feature>
<feature type="domain" description="ABC transporter 2" evidence="1">
    <location>
        <begin position="262"/>
        <end position="507"/>
    </location>
</feature>
<feature type="binding site" evidence="1">
    <location>
        <begin position="38"/>
        <end position="45"/>
    </location>
    <ligand>
        <name>ATP</name>
        <dbReference type="ChEBI" id="CHEBI:30616"/>
    </ligand>
</feature>
<sequence>MSDYLLQMNGIVKSFGGVKALNGIDITVKPGECVGLCGENGAGKSTLMKVLSAVYPYGTWEGEILWDGQPLKAQSISETEAAGIVIIHQELTLVPDLSVAENIFMGHELTLPGGRMNYPAMMHRAESLMRELKVPDMNVALPVSQYGGGYQQLVEIAKALNKKARLLILDEPSSALTRSEIEVLLDIIHDLKAKGVACVYISHKLDEVAAVCDTVSVIRDGKHIATTAMADMDIPKIITQMVGREMSNLYPTEPHDVGEVIFEARHITCYDVDNPRRKRVDDVSFLLRRGEILGIAGLVGAGRTELVSALFGAYPGRYSGEVWLNGQAIDTRTPLKSIRAGVCMVPEDRKRQGIIPDLGVGQNITLAVLDSYSNMTRIDAEAELGSIDREISRMHLKTASPFLPITSLSGGNQQKAVLAKMLLTRPRVLILDEPTRGVDVGAKYEIYKLMGALAAEGVSIIMVSSELAEVLGVSDRVLVIGDGQLRGDFINHDLTQEQVLAAALSHSDAPHNNARKTA</sequence>